<gene>
    <name evidence="7 9" type="primary">Abcb8</name>
    <name evidence="1" type="synonym">Mitosur</name>
</gene>
<sequence>MLVHLFRFGIRGGPVPGWSLQSLRFQTFSAARSSDDRLSSHLLRTVAQLRVQLRAHLPRAPPASHWSPSAWCWVGGTLVVPAVLWQHPRLCLIALCEAKESPPAQPTRAPELRFNWKLFWHFLHPHLLALGAAIVLALGAALVNVQIPLLLGQLVEIVAKYTRDHMGSFVSESRKLSVQLLLLYGVQGLLTFGYLVLLSHIGERMAMDMRKALFSSLLRQDIAFFDAKKTGQLVSRLTTDVQEFKSSFKLVISQGLRSCTQVIGSLVSLSMLSPRLTLMLAVVTPALMGVGTLMGSGLRKLSRQCQEQIARATGVADEALGNVRTVRAFAMEKREEERYQAELESCCCKAEELGRGIALFQGLSNIAFNCMVLGTLFIGGSLVAGQQLKGGDLMSFLVASQTVQRSMASLSVLFGQVVRGLSAGARVFEYMALSPVIPLTGGYCIPNKDIRGSITFQNVTFSYPCRPGFNVLKDFTLKLPSGKIVALVGQSGGGKTTVASLLERFYDPEAGSVTLDGHDLRTLNPSWLRGQVIGFISQEPVLFATTIMENIRFGKLDASDEEVYTAAREANAHEFISSFPDGYSTVVGERGTTLSGGQKQRLAIARALIKQPTVLILDEATSALDAESERVVQEALDRASAGRTVLVIAHRLSTVRAAHSIIVMANGQVCEAGTHEELLKKGGLYSELIRRQTLDASLTSTPPAEKPEDPKSCQSKA</sequence>
<proteinExistence type="evidence at protein level"/>
<reference key="1">
    <citation type="journal article" date="2005" name="Science">
        <title>The transcriptional landscape of the mammalian genome.</title>
        <authorList>
            <person name="Carninci P."/>
            <person name="Kasukawa T."/>
            <person name="Katayama S."/>
            <person name="Gough J."/>
            <person name="Frith M.C."/>
            <person name="Maeda N."/>
            <person name="Oyama R."/>
            <person name="Ravasi T."/>
            <person name="Lenhard B."/>
            <person name="Wells C."/>
            <person name="Kodzius R."/>
            <person name="Shimokawa K."/>
            <person name="Bajic V.B."/>
            <person name="Brenner S.E."/>
            <person name="Batalov S."/>
            <person name="Forrest A.R."/>
            <person name="Zavolan M."/>
            <person name="Davis M.J."/>
            <person name="Wilming L.G."/>
            <person name="Aidinis V."/>
            <person name="Allen J.E."/>
            <person name="Ambesi-Impiombato A."/>
            <person name="Apweiler R."/>
            <person name="Aturaliya R.N."/>
            <person name="Bailey T.L."/>
            <person name="Bansal M."/>
            <person name="Baxter L."/>
            <person name="Beisel K.W."/>
            <person name="Bersano T."/>
            <person name="Bono H."/>
            <person name="Chalk A.M."/>
            <person name="Chiu K.P."/>
            <person name="Choudhary V."/>
            <person name="Christoffels A."/>
            <person name="Clutterbuck D.R."/>
            <person name="Crowe M.L."/>
            <person name="Dalla E."/>
            <person name="Dalrymple B.P."/>
            <person name="de Bono B."/>
            <person name="Della Gatta G."/>
            <person name="di Bernardo D."/>
            <person name="Down T."/>
            <person name="Engstrom P."/>
            <person name="Fagiolini M."/>
            <person name="Faulkner G."/>
            <person name="Fletcher C.F."/>
            <person name="Fukushima T."/>
            <person name="Furuno M."/>
            <person name="Futaki S."/>
            <person name="Gariboldi M."/>
            <person name="Georgii-Hemming P."/>
            <person name="Gingeras T.R."/>
            <person name="Gojobori T."/>
            <person name="Green R.E."/>
            <person name="Gustincich S."/>
            <person name="Harbers M."/>
            <person name="Hayashi Y."/>
            <person name="Hensch T.K."/>
            <person name="Hirokawa N."/>
            <person name="Hill D."/>
            <person name="Huminiecki L."/>
            <person name="Iacono M."/>
            <person name="Ikeo K."/>
            <person name="Iwama A."/>
            <person name="Ishikawa T."/>
            <person name="Jakt M."/>
            <person name="Kanapin A."/>
            <person name="Katoh M."/>
            <person name="Kawasawa Y."/>
            <person name="Kelso J."/>
            <person name="Kitamura H."/>
            <person name="Kitano H."/>
            <person name="Kollias G."/>
            <person name="Krishnan S.P."/>
            <person name="Kruger A."/>
            <person name="Kummerfeld S.K."/>
            <person name="Kurochkin I.V."/>
            <person name="Lareau L.F."/>
            <person name="Lazarevic D."/>
            <person name="Lipovich L."/>
            <person name="Liu J."/>
            <person name="Liuni S."/>
            <person name="McWilliam S."/>
            <person name="Madan Babu M."/>
            <person name="Madera M."/>
            <person name="Marchionni L."/>
            <person name="Matsuda H."/>
            <person name="Matsuzawa S."/>
            <person name="Miki H."/>
            <person name="Mignone F."/>
            <person name="Miyake S."/>
            <person name="Morris K."/>
            <person name="Mottagui-Tabar S."/>
            <person name="Mulder N."/>
            <person name="Nakano N."/>
            <person name="Nakauchi H."/>
            <person name="Ng P."/>
            <person name="Nilsson R."/>
            <person name="Nishiguchi S."/>
            <person name="Nishikawa S."/>
            <person name="Nori F."/>
            <person name="Ohara O."/>
            <person name="Okazaki Y."/>
            <person name="Orlando V."/>
            <person name="Pang K.C."/>
            <person name="Pavan W.J."/>
            <person name="Pavesi G."/>
            <person name="Pesole G."/>
            <person name="Petrovsky N."/>
            <person name="Piazza S."/>
            <person name="Reed J."/>
            <person name="Reid J.F."/>
            <person name="Ring B.Z."/>
            <person name="Ringwald M."/>
            <person name="Rost B."/>
            <person name="Ruan Y."/>
            <person name="Salzberg S.L."/>
            <person name="Sandelin A."/>
            <person name="Schneider C."/>
            <person name="Schoenbach C."/>
            <person name="Sekiguchi K."/>
            <person name="Semple C.A."/>
            <person name="Seno S."/>
            <person name="Sessa L."/>
            <person name="Sheng Y."/>
            <person name="Shibata Y."/>
            <person name="Shimada H."/>
            <person name="Shimada K."/>
            <person name="Silva D."/>
            <person name="Sinclair B."/>
            <person name="Sperling S."/>
            <person name="Stupka E."/>
            <person name="Sugiura K."/>
            <person name="Sultana R."/>
            <person name="Takenaka Y."/>
            <person name="Taki K."/>
            <person name="Tammoja K."/>
            <person name="Tan S.L."/>
            <person name="Tang S."/>
            <person name="Taylor M.S."/>
            <person name="Tegner J."/>
            <person name="Teichmann S.A."/>
            <person name="Ueda H.R."/>
            <person name="van Nimwegen E."/>
            <person name="Verardo R."/>
            <person name="Wei C.L."/>
            <person name="Yagi K."/>
            <person name="Yamanishi H."/>
            <person name="Zabarovsky E."/>
            <person name="Zhu S."/>
            <person name="Zimmer A."/>
            <person name="Hide W."/>
            <person name="Bult C."/>
            <person name="Grimmond S.M."/>
            <person name="Teasdale R.D."/>
            <person name="Liu E.T."/>
            <person name="Brusic V."/>
            <person name="Quackenbush J."/>
            <person name="Wahlestedt C."/>
            <person name="Mattick J.S."/>
            <person name="Hume D.A."/>
            <person name="Kai C."/>
            <person name="Sasaki D."/>
            <person name="Tomaru Y."/>
            <person name="Fukuda S."/>
            <person name="Kanamori-Katayama M."/>
            <person name="Suzuki M."/>
            <person name="Aoki J."/>
            <person name="Arakawa T."/>
            <person name="Iida J."/>
            <person name="Imamura K."/>
            <person name="Itoh M."/>
            <person name="Kato T."/>
            <person name="Kawaji H."/>
            <person name="Kawagashira N."/>
            <person name="Kawashima T."/>
            <person name="Kojima M."/>
            <person name="Kondo S."/>
            <person name="Konno H."/>
            <person name="Nakano K."/>
            <person name="Ninomiya N."/>
            <person name="Nishio T."/>
            <person name="Okada M."/>
            <person name="Plessy C."/>
            <person name="Shibata K."/>
            <person name="Shiraki T."/>
            <person name="Suzuki S."/>
            <person name="Tagami M."/>
            <person name="Waki K."/>
            <person name="Watahiki A."/>
            <person name="Okamura-Oho Y."/>
            <person name="Suzuki H."/>
            <person name="Kawai J."/>
            <person name="Hayashizaki Y."/>
        </authorList>
    </citation>
    <scope>NUCLEOTIDE SEQUENCE [LARGE SCALE MRNA]</scope>
    <source>
        <strain>C57BL/6J</strain>
        <tissue>Head</tissue>
        <tissue>Pituitary</tissue>
        <tissue>Skin</tissue>
    </source>
</reference>
<reference key="2">
    <citation type="journal article" date="2004" name="Genome Res.">
        <title>The status, quality, and expansion of the NIH full-length cDNA project: the Mammalian Gene Collection (MGC).</title>
        <authorList>
            <consortium name="The MGC Project Team"/>
        </authorList>
    </citation>
    <scope>NUCLEOTIDE SEQUENCE [LARGE SCALE MRNA]</scope>
    <source>
        <strain>FVB/N</strain>
        <tissue>Kidney</tissue>
    </source>
</reference>
<reference key="3">
    <citation type="journal article" date="2010" name="Cell">
        <title>A tissue-specific atlas of mouse protein phosphorylation and expression.</title>
        <authorList>
            <person name="Huttlin E.L."/>
            <person name="Jedrychowski M.P."/>
            <person name="Elias J.E."/>
            <person name="Goswami T."/>
            <person name="Rad R."/>
            <person name="Beausoleil S.A."/>
            <person name="Villen J."/>
            <person name="Haas W."/>
            <person name="Sowa M.E."/>
            <person name="Gygi S.P."/>
        </authorList>
    </citation>
    <scope>IDENTIFICATION BY MASS SPECTROMETRY [LARGE SCALE ANALYSIS]</scope>
    <source>
        <tissue>Brown adipose tissue</tissue>
        <tissue>Heart</tissue>
        <tissue>Kidney</tissue>
        <tissue>Liver</tissue>
        <tissue>Pancreas</tissue>
        <tissue>Testis</tissue>
    </source>
</reference>
<reference key="4">
    <citation type="journal article" date="2012" name="Proc. Natl. Acad. Sci. U.S.A.">
        <title>Disruption of ATP-binding cassette B8 in mice leads to cardiomyopathy through a decrease in mitochondrial iron export.</title>
        <authorList>
            <person name="Ichikawa Y."/>
            <person name="Bayeva M."/>
            <person name="Ghanefar M."/>
            <person name="Potini V."/>
            <person name="Sun L."/>
            <person name="Mutharasan R.K."/>
            <person name="Wu R."/>
            <person name="Khechaduri A."/>
            <person name="Jairaj Naik T."/>
            <person name="Ardehali H."/>
        </authorList>
    </citation>
    <scope>FUNCTION</scope>
    <scope>DISRUPTION PHENOTYPE</scope>
</reference>
<protein>
    <recommendedName>
        <fullName evidence="8">Mitochondrial potassium channel ATP-binding subunit</fullName>
    </recommendedName>
    <alternativeName>
        <fullName evidence="7">ATP-binding cassette sub-family B member 8, mitochondrial</fullName>
        <shortName evidence="7">ABCB8</shortName>
    </alternativeName>
    <alternativeName>
        <fullName evidence="1">Mitochondrial sulfonylurea-receptor</fullName>
        <shortName evidence="1">MITOSUR</shortName>
    </alternativeName>
</protein>
<comment type="function">
    <text evidence="1 6">ATP-binding subunit of the mitochondrial ATP-gated potassium channel (mitoK(ATP)). Together with pore-forming subunit CCDC51/MITOK of the mitoK(ATP) channel, mediates ATP-dependent potassium currents across the mitochondrial inner membrane. An increase in ATP intracellular levels closes the channel, inhibiting K(+) transport, whereas a decrease in ATP levels enhances K(+) uptake in the mitochondrial matrix (By similarity). Plays a role in mitochondrial iron transport (PubMed:22375032). Required for maintenance of normal cardiac function, possibly by influencing mitochondrial iron export and regulating the maturation of cytosolic iron sulfur cluster-containing enzymes (PubMed:22375032).</text>
</comment>
<comment type="activity regulation">
    <text evidence="1">Channel activity inhibited by ATP via ABCB8/MITOSUR subunit.</text>
</comment>
<comment type="subunit">
    <text evidence="1">The mitochondrial potassium channel (mitoK(ATP)) is composed of 4 subunits of CCDC51/MITOK and 4 subunits of ABCB8/MITOSUR (By similarity). Interacts with PAAT (By similarity). Interacts with NRP1; NRP1 regulates ABCB8/MITOSUR protein levels in mitochondria (By similarity).</text>
</comment>
<comment type="subcellular location">
    <subcellularLocation>
        <location evidence="1">Mitochondrion inner membrane</location>
        <topology evidence="4">Multi-pass membrane protein</topology>
    </subcellularLocation>
</comment>
<comment type="disruption phenotype">
    <text evidence="6">Conditional knockout in heart results in a severe cardiomyopathy and mitochondrial iron accumulation.</text>
</comment>
<comment type="similarity">
    <text evidence="8">Belongs to the ABC transporter superfamily. ABCB family. Multidrug resistance exporter (TC 3.A.1.201) subfamily.</text>
</comment>
<name>MITOS_MOUSE</name>
<evidence type="ECO:0000250" key="1">
    <source>
        <dbReference type="UniProtKB" id="Q9NUT2"/>
    </source>
</evidence>
<evidence type="ECO:0000255" key="2"/>
<evidence type="ECO:0000255" key="3">
    <source>
        <dbReference type="PROSITE-ProRule" id="PRU00434"/>
    </source>
</evidence>
<evidence type="ECO:0000255" key="4">
    <source>
        <dbReference type="PROSITE-ProRule" id="PRU00441"/>
    </source>
</evidence>
<evidence type="ECO:0000256" key="5">
    <source>
        <dbReference type="SAM" id="MobiDB-lite"/>
    </source>
</evidence>
<evidence type="ECO:0000269" key="6">
    <source>
    </source>
</evidence>
<evidence type="ECO:0000303" key="7">
    <source>
    </source>
</evidence>
<evidence type="ECO:0000305" key="8"/>
<evidence type="ECO:0000312" key="9">
    <source>
        <dbReference type="MGI" id="MGI:1351667"/>
    </source>
</evidence>
<dbReference type="EMBL" id="AK014319">
    <property type="protein sequence ID" value="BAB29270.1"/>
    <property type="molecule type" value="mRNA"/>
</dbReference>
<dbReference type="EMBL" id="AK030624">
    <property type="protein sequence ID" value="BAC27052.1"/>
    <property type="molecule type" value="mRNA"/>
</dbReference>
<dbReference type="EMBL" id="AK049152">
    <property type="protein sequence ID" value="BAC33571.1"/>
    <property type="molecule type" value="mRNA"/>
</dbReference>
<dbReference type="EMBL" id="AK076315">
    <property type="protein sequence ID" value="BAC36297.1"/>
    <property type="molecule type" value="mRNA"/>
</dbReference>
<dbReference type="EMBL" id="AK166704">
    <property type="protein sequence ID" value="BAE38958.1"/>
    <property type="molecule type" value="mRNA"/>
</dbReference>
<dbReference type="EMBL" id="BC015301">
    <property type="protein sequence ID" value="AAH15301.1"/>
    <property type="molecule type" value="mRNA"/>
</dbReference>
<dbReference type="CCDS" id="CCDS19118.1"/>
<dbReference type="RefSeq" id="NP_083296.2">
    <property type="nucleotide sequence ID" value="NM_029020.2"/>
</dbReference>
<dbReference type="RefSeq" id="XP_006535875.1">
    <property type="nucleotide sequence ID" value="XM_006535812.1"/>
</dbReference>
<dbReference type="SMR" id="Q9CXJ4"/>
<dbReference type="BioGRID" id="216880">
    <property type="interactions" value="1"/>
</dbReference>
<dbReference type="ComplexPortal" id="CPX-6084">
    <property type="entry name" value="MITOK-MITOSUR mitochondrial potassium channel complex"/>
</dbReference>
<dbReference type="FunCoup" id="Q9CXJ4">
    <property type="interactions" value="1233"/>
</dbReference>
<dbReference type="IntAct" id="Q9CXJ4">
    <property type="interactions" value="1"/>
</dbReference>
<dbReference type="STRING" id="10090.ENSMUSP00000110729"/>
<dbReference type="GlyGen" id="Q9CXJ4">
    <property type="glycosylation" value="1 site, 1 O-linked glycan (1 site)"/>
</dbReference>
<dbReference type="iPTMnet" id="Q9CXJ4"/>
<dbReference type="PhosphoSitePlus" id="Q9CXJ4"/>
<dbReference type="SwissPalm" id="Q9CXJ4"/>
<dbReference type="jPOST" id="Q9CXJ4"/>
<dbReference type="PaxDb" id="10090-ENSMUSP00000110729"/>
<dbReference type="PeptideAtlas" id="Q9CXJ4"/>
<dbReference type="ProteomicsDB" id="285953"/>
<dbReference type="Pumba" id="Q9CXJ4"/>
<dbReference type="Antibodypedia" id="32942">
    <property type="antibodies" value="187 antibodies from 28 providers"/>
</dbReference>
<dbReference type="DNASU" id="74610"/>
<dbReference type="Ensembl" id="ENSMUST00000073076.12">
    <property type="protein sequence ID" value="ENSMUSP00000072826.6"/>
    <property type="gene ID" value="ENSMUSG00000028973.19"/>
</dbReference>
<dbReference type="Ensembl" id="ENSMUST00000115077.8">
    <property type="protein sequence ID" value="ENSMUSP00000110729.2"/>
    <property type="gene ID" value="ENSMUSG00000028973.19"/>
</dbReference>
<dbReference type="GeneID" id="74610"/>
<dbReference type="KEGG" id="mmu:74610"/>
<dbReference type="UCSC" id="uc008wrh.1">
    <property type="organism name" value="mouse"/>
</dbReference>
<dbReference type="AGR" id="MGI:1351667"/>
<dbReference type="CTD" id="11194"/>
<dbReference type="MGI" id="MGI:1351667">
    <property type="gene designation" value="Abcb8"/>
</dbReference>
<dbReference type="VEuPathDB" id="HostDB:ENSMUSG00000028973"/>
<dbReference type="eggNOG" id="KOG0058">
    <property type="taxonomic scope" value="Eukaryota"/>
</dbReference>
<dbReference type="GeneTree" id="ENSGT00940000159126"/>
<dbReference type="HOGENOM" id="CLU_000604_84_3_1"/>
<dbReference type="InParanoid" id="Q9CXJ4"/>
<dbReference type="OMA" id="MTWLGER"/>
<dbReference type="OrthoDB" id="6500128at2759"/>
<dbReference type="PhylomeDB" id="Q9CXJ4"/>
<dbReference type="TreeFam" id="TF105196"/>
<dbReference type="Reactome" id="R-MMU-1369007">
    <property type="pathway name" value="Mitochondrial ABC transporters"/>
</dbReference>
<dbReference type="BioGRID-ORCS" id="74610">
    <property type="hits" value="1 hit in 59 CRISPR screens"/>
</dbReference>
<dbReference type="CD-CODE" id="CE726F99">
    <property type="entry name" value="Postsynaptic density"/>
</dbReference>
<dbReference type="ChiTaRS" id="Abcb8">
    <property type="organism name" value="mouse"/>
</dbReference>
<dbReference type="PRO" id="PR:Q9CXJ4"/>
<dbReference type="Proteomes" id="UP000000589">
    <property type="component" value="Chromosome 5"/>
</dbReference>
<dbReference type="RNAct" id="Q9CXJ4">
    <property type="molecule type" value="protein"/>
</dbReference>
<dbReference type="Bgee" id="ENSMUSG00000028973">
    <property type="expression patterns" value="Expressed in spermatocyte and 244 other cell types or tissues"/>
</dbReference>
<dbReference type="ExpressionAtlas" id="Q9CXJ4">
    <property type="expression patterns" value="baseline and differential"/>
</dbReference>
<dbReference type="GO" id="GO:0062157">
    <property type="term" value="C:mitochondrial ATP-gated potassium channel complex"/>
    <property type="evidence" value="ECO:0000353"/>
    <property type="project" value="ComplexPortal"/>
</dbReference>
<dbReference type="GO" id="GO:0005743">
    <property type="term" value="C:mitochondrial inner membrane"/>
    <property type="evidence" value="ECO:0000314"/>
    <property type="project" value="ComplexPortal"/>
</dbReference>
<dbReference type="GO" id="GO:0005739">
    <property type="term" value="C:mitochondrion"/>
    <property type="evidence" value="ECO:0007005"/>
    <property type="project" value="MGI"/>
</dbReference>
<dbReference type="GO" id="GO:0005730">
    <property type="term" value="C:nucleolus"/>
    <property type="evidence" value="ECO:0007669"/>
    <property type="project" value="Ensembl"/>
</dbReference>
<dbReference type="GO" id="GO:0005654">
    <property type="term" value="C:nucleoplasm"/>
    <property type="evidence" value="ECO:0007669"/>
    <property type="project" value="Ensembl"/>
</dbReference>
<dbReference type="GO" id="GO:0140359">
    <property type="term" value="F:ABC-type transporter activity"/>
    <property type="evidence" value="ECO:0007669"/>
    <property type="project" value="InterPro"/>
</dbReference>
<dbReference type="GO" id="GO:0005524">
    <property type="term" value="F:ATP binding"/>
    <property type="evidence" value="ECO:0000250"/>
    <property type="project" value="UniProtKB"/>
</dbReference>
<dbReference type="GO" id="GO:0016887">
    <property type="term" value="F:ATP hydrolysis activity"/>
    <property type="evidence" value="ECO:0007669"/>
    <property type="project" value="InterPro"/>
</dbReference>
<dbReference type="GO" id="GO:0006884">
    <property type="term" value="P:cell volume homeostasis"/>
    <property type="evidence" value="ECO:0000266"/>
    <property type="project" value="ComplexPortal"/>
</dbReference>
<dbReference type="GO" id="GO:0140141">
    <property type="term" value="P:mitochondrial potassium ion transmembrane transport"/>
    <property type="evidence" value="ECO:0000266"/>
    <property type="project" value="ComplexPortal"/>
</dbReference>
<dbReference type="GO" id="GO:0071805">
    <property type="term" value="P:potassium ion transmembrane transport"/>
    <property type="evidence" value="ECO:0000250"/>
    <property type="project" value="UniProtKB"/>
</dbReference>
<dbReference type="CDD" id="cd18574">
    <property type="entry name" value="ABC_6TM_ABCB8_like"/>
    <property type="match status" value="1"/>
</dbReference>
<dbReference type="CDD" id="cd03249">
    <property type="entry name" value="ABC_MTABC3_MDL1_MDL2"/>
    <property type="match status" value="1"/>
</dbReference>
<dbReference type="FunFam" id="1.20.1560.10:FF:000016">
    <property type="entry name" value="ATP-binding cassette sub-family B member 8, mitochondrial"/>
    <property type="match status" value="1"/>
</dbReference>
<dbReference type="FunFam" id="3.40.50.300:FF:000403">
    <property type="entry name" value="ATP-binding cassette sub-family B member 8, mitochondrial"/>
    <property type="match status" value="1"/>
</dbReference>
<dbReference type="Gene3D" id="1.20.1560.10">
    <property type="entry name" value="ABC transporter type 1, transmembrane domain"/>
    <property type="match status" value="1"/>
</dbReference>
<dbReference type="Gene3D" id="3.40.50.300">
    <property type="entry name" value="P-loop containing nucleotide triphosphate hydrolases"/>
    <property type="match status" value="1"/>
</dbReference>
<dbReference type="InterPro" id="IPR003593">
    <property type="entry name" value="AAA+_ATPase"/>
</dbReference>
<dbReference type="InterPro" id="IPR011527">
    <property type="entry name" value="ABC1_TM_dom"/>
</dbReference>
<dbReference type="InterPro" id="IPR036640">
    <property type="entry name" value="ABC1_TM_sf"/>
</dbReference>
<dbReference type="InterPro" id="IPR003439">
    <property type="entry name" value="ABC_transporter-like_ATP-bd"/>
</dbReference>
<dbReference type="InterPro" id="IPR017871">
    <property type="entry name" value="ABC_transporter-like_CS"/>
</dbReference>
<dbReference type="InterPro" id="IPR027417">
    <property type="entry name" value="P-loop_NTPase"/>
</dbReference>
<dbReference type="InterPro" id="IPR039421">
    <property type="entry name" value="Type_1_exporter"/>
</dbReference>
<dbReference type="PANTHER" id="PTHR43394">
    <property type="entry name" value="ATP-DEPENDENT PERMEASE MDL1, MITOCHONDRIAL"/>
    <property type="match status" value="1"/>
</dbReference>
<dbReference type="PANTHER" id="PTHR43394:SF17">
    <property type="entry name" value="MITOCHONDRIAL POTASSIUM CHANNEL ATP-BINDING SUBUNIT"/>
    <property type="match status" value="1"/>
</dbReference>
<dbReference type="Pfam" id="PF00664">
    <property type="entry name" value="ABC_membrane"/>
    <property type="match status" value="1"/>
</dbReference>
<dbReference type="Pfam" id="PF00005">
    <property type="entry name" value="ABC_tran"/>
    <property type="match status" value="1"/>
</dbReference>
<dbReference type="PIRSF" id="PIRSF002773">
    <property type="entry name" value="ABC_prm/ATPase_B"/>
    <property type="match status" value="1"/>
</dbReference>
<dbReference type="SMART" id="SM00382">
    <property type="entry name" value="AAA"/>
    <property type="match status" value="1"/>
</dbReference>
<dbReference type="SUPFAM" id="SSF90123">
    <property type="entry name" value="ABC transporter transmembrane region"/>
    <property type="match status" value="1"/>
</dbReference>
<dbReference type="SUPFAM" id="SSF52540">
    <property type="entry name" value="P-loop containing nucleoside triphosphate hydrolases"/>
    <property type="match status" value="1"/>
</dbReference>
<dbReference type="PROSITE" id="PS50929">
    <property type="entry name" value="ABC_TM1F"/>
    <property type="match status" value="1"/>
</dbReference>
<dbReference type="PROSITE" id="PS00211">
    <property type="entry name" value="ABC_TRANSPORTER_1"/>
    <property type="match status" value="1"/>
</dbReference>
<dbReference type="PROSITE" id="PS50893">
    <property type="entry name" value="ABC_TRANSPORTER_2"/>
    <property type="match status" value="1"/>
</dbReference>
<keyword id="KW-0067">ATP-binding</keyword>
<keyword id="KW-0406">Ion transport</keyword>
<keyword id="KW-0472">Membrane</keyword>
<keyword id="KW-0496">Mitochondrion</keyword>
<keyword id="KW-0999">Mitochondrion inner membrane</keyword>
<keyword id="KW-0547">Nucleotide-binding</keyword>
<keyword id="KW-0630">Potassium</keyword>
<keyword id="KW-0633">Potassium transport</keyword>
<keyword id="KW-1185">Reference proteome</keyword>
<keyword id="KW-0809">Transit peptide</keyword>
<keyword id="KW-0812">Transmembrane</keyword>
<keyword id="KW-1133">Transmembrane helix</keyword>
<keyword id="KW-0813">Transport</keyword>
<feature type="transit peptide" description="Mitochondrion" evidence="2">
    <location>
        <begin position="1"/>
        <end position="25"/>
    </location>
</feature>
<feature type="chain" id="PRO_0000356233" description="Mitochondrial potassium channel ATP-binding subunit" evidence="2">
    <location>
        <begin position="26"/>
        <end position="717"/>
    </location>
</feature>
<feature type="transmembrane region" description="Helical" evidence="2 4">
    <location>
        <begin position="127"/>
        <end position="147"/>
    </location>
</feature>
<feature type="transmembrane region" description="Helical" evidence="2 4">
    <location>
        <begin position="178"/>
        <end position="198"/>
    </location>
</feature>
<feature type="transmembrane region" description="Helical" evidence="2 4">
    <location>
        <begin position="278"/>
        <end position="298"/>
    </location>
</feature>
<feature type="transmembrane region" description="Helical" evidence="2 4">
    <location>
        <begin position="365"/>
        <end position="385"/>
    </location>
</feature>
<feature type="domain" description="ABC transmembrane type-1" evidence="4">
    <location>
        <begin position="132"/>
        <end position="419"/>
    </location>
</feature>
<feature type="domain" description="ABC transporter" evidence="3">
    <location>
        <begin position="454"/>
        <end position="691"/>
    </location>
</feature>
<feature type="region of interest" description="Disordered" evidence="5">
    <location>
        <begin position="695"/>
        <end position="717"/>
    </location>
</feature>
<feature type="binding site" evidence="3">
    <location>
        <begin position="489"/>
        <end position="496"/>
    </location>
    <ligand>
        <name>ATP</name>
        <dbReference type="ChEBI" id="CHEBI:30616"/>
    </ligand>
</feature>
<feature type="sequence conflict" description="In Ref. 1; BAC33571." evidence="8" ref="1">
    <original>S</original>
    <variation>Y</variation>
    <location>
        <position position="101"/>
    </location>
</feature>
<feature type="sequence conflict" description="In Ref. 1; BAC36297." evidence="8" ref="1">
    <original>I</original>
    <variation>M</variation>
    <location>
        <position position="157"/>
    </location>
</feature>
<feature type="sequence conflict" description="In Ref. 1; BAC36297." evidence="8" ref="1">
    <original>F</original>
    <variation>L</variation>
    <location>
        <position position="225"/>
    </location>
</feature>
<accession>Q9CXJ4</accession>
<accession>Q8C695</accession>
<accession>Q8C7W4</accession>
<organism>
    <name type="scientific">Mus musculus</name>
    <name type="common">Mouse</name>
    <dbReference type="NCBI Taxonomy" id="10090"/>
    <lineage>
        <taxon>Eukaryota</taxon>
        <taxon>Metazoa</taxon>
        <taxon>Chordata</taxon>
        <taxon>Craniata</taxon>
        <taxon>Vertebrata</taxon>
        <taxon>Euteleostomi</taxon>
        <taxon>Mammalia</taxon>
        <taxon>Eutheria</taxon>
        <taxon>Euarchontoglires</taxon>
        <taxon>Glires</taxon>
        <taxon>Rodentia</taxon>
        <taxon>Myomorpha</taxon>
        <taxon>Muroidea</taxon>
        <taxon>Muridae</taxon>
        <taxon>Murinae</taxon>
        <taxon>Mus</taxon>
        <taxon>Mus</taxon>
    </lineage>
</organism>